<name>ILVD_STRAW</name>
<comment type="function">
    <text evidence="1">Functions in the biosynthesis of branched-chain amino acids. Catalyzes the dehydration of (2R,3R)-2,3-dihydroxy-3-methylpentanoate (2,3-dihydroxy-3-methylvalerate) into 2-oxo-3-methylpentanoate (2-oxo-3-methylvalerate) and of (2R)-2,3-dihydroxy-3-methylbutanoate (2,3-dihydroxyisovalerate) into 2-oxo-3-methylbutanoate (2-oxoisovalerate), the penultimate precursor to L-isoleucine and L-valine, respectively.</text>
</comment>
<comment type="catalytic activity">
    <reaction evidence="1">
        <text>(2R)-2,3-dihydroxy-3-methylbutanoate = 3-methyl-2-oxobutanoate + H2O</text>
        <dbReference type="Rhea" id="RHEA:24809"/>
        <dbReference type="ChEBI" id="CHEBI:11851"/>
        <dbReference type="ChEBI" id="CHEBI:15377"/>
        <dbReference type="ChEBI" id="CHEBI:49072"/>
        <dbReference type="EC" id="4.2.1.9"/>
    </reaction>
    <physiologicalReaction direction="left-to-right" evidence="1">
        <dbReference type="Rhea" id="RHEA:24810"/>
    </physiologicalReaction>
</comment>
<comment type="catalytic activity">
    <reaction evidence="1">
        <text>(2R,3R)-2,3-dihydroxy-3-methylpentanoate = (S)-3-methyl-2-oxopentanoate + H2O</text>
        <dbReference type="Rhea" id="RHEA:27694"/>
        <dbReference type="ChEBI" id="CHEBI:15377"/>
        <dbReference type="ChEBI" id="CHEBI:35146"/>
        <dbReference type="ChEBI" id="CHEBI:49258"/>
        <dbReference type="EC" id="4.2.1.9"/>
    </reaction>
    <physiologicalReaction direction="left-to-right" evidence="1">
        <dbReference type="Rhea" id="RHEA:27695"/>
    </physiologicalReaction>
</comment>
<comment type="cofactor">
    <cofactor evidence="1">
        <name>[2Fe-2S] cluster</name>
        <dbReference type="ChEBI" id="CHEBI:190135"/>
    </cofactor>
    <text evidence="1">Binds 1 [2Fe-2S] cluster per subunit. This cluster acts as a Lewis acid cofactor.</text>
</comment>
<comment type="cofactor">
    <cofactor evidence="1">
        <name>Mg(2+)</name>
        <dbReference type="ChEBI" id="CHEBI:18420"/>
    </cofactor>
</comment>
<comment type="pathway">
    <text evidence="1">Amino-acid biosynthesis; L-isoleucine biosynthesis; L-isoleucine from 2-oxobutanoate: step 3/4.</text>
</comment>
<comment type="pathway">
    <text evidence="1">Amino-acid biosynthesis; L-valine biosynthesis; L-valine from pyruvate: step 3/4.</text>
</comment>
<comment type="subunit">
    <text evidence="1">Homodimer.</text>
</comment>
<comment type="similarity">
    <text evidence="1">Belongs to the IlvD/Edd family.</text>
</comment>
<sequence length="617" mass="65370">MPELRSRTVTHGRNMAGARALMRASGVPGADIGRKPIIAVANSFTEFVPGHTHLQPVGRIVSEAITAAGGIAREFNTIAVDDGIAMGHGGMLYSLPSRDLIADSVEYMVEAHCADALICISNCDKITPGMLMAALRLNIPTVFVSGGPMESGRATLVDGTVRTLDLVDAISDAVNDKISDEDILRIEENACPTCGSCSGMFTANSMNCLTEAIGLSLPGNGSVLATHTARKGLYEDAARTVVDITRRYYEQDDESVLPRNIATHAAFENAMALDIAMGGSTNTILHLLAAAQEAGVPFGLDEINEVSRRVPCLAKVAPNVAKDRTYYMEDVHRAGGIPALLGELHRAGLLNEDVHSVHSPSLSDWLKTWDVRAGSPSPEAIELWHAAPGCVRSSEAFSQSERWEALDEDAEGGCIRSAEHAYSKDGGLAVLKGNLAVDGCVVKTAGVDESIWTFEGPAVVCESQDEAVDKILRKEITHGDVVVIRYEGPKGGPGMQEMLYPTSFLKGRGLGKTCALITDGRFSGGTSGLSIGHASPEAASGGTIALVQDGDRIRIDIPNRTIDLLVDEAELSRRDQALNGVYAPVNRERKVSAALRAYAAMATSADKGAVRDVSKLG</sequence>
<protein>
    <recommendedName>
        <fullName evidence="1">Dihydroxy-acid dehydratase</fullName>
        <shortName evidence="1">DAD</shortName>
        <ecNumber evidence="1">4.2.1.9</ecNumber>
    </recommendedName>
</protein>
<organism>
    <name type="scientific">Streptomyces avermitilis (strain ATCC 31267 / DSM 46492 / JCM 5070 / NBRC 14893 / NCIMB 12804 / NRRL 8165 / MA-4680)</name>
    <dbReference type="NCBI Taxonomy" id="227882"/>
    <lineage>
        <taxon>Bacteria</taxon>
        <taxon>Bacillati</taxon>
        <taxon>Actinomycetota</taxon>
        <taxon>Actinomycetes</taxon>
        <taxon>Kitasatosporales</taxon>
        <taxon>Streptomycetaceae</taxon>
        <taxon>Streptomyces</taxon>
    </lineage>
</organism>
<evidence type="ECO:0000255" key="1">
    <source>
        <dbReference type="HAMAP-Rule" id="MF_00012"/>
    </source>
</evidence>
<dbReference type="EC" id="4.2.1.9" evidence="1"/>
<dbReference type="EMBL" id="BA000030">
    <property type="protein sequence ID" value="BAC72428.1"/>
    <property type="molecule type" value="Genomic_DNA"/>
</dbReference>
<dbReference type="RefSeq" id="WP_010986140.1">
    <property type="nucleotide sequence ID" value="NZ_JZJK01000054.1"/>
</dbReference>
<dbReference type="SMR" id="Q82E99"/>
<dbReference type="GeneID" id="41541796"/>
<dbReference type="KEGG" id="sma:SAVERM_4716"/>
<dbReference type="eggNOG" id="COG0129">
    <property type="taxonomic scope" value="Bacteria"/>
</dbReference>
<dbReference type="HOGENOM" id="CLU_014271_4_2_11"/>
<dbReference type="OrthoDB" id="9807077at2"/>
<dbReference type="UniPathway" id="UPA00047">
    <property type="reaction ID" value="UER00057"/>
</dbReference>
<dbReference type="UniPathway" id="UPA00049">
    <property type="reaction ID" value="UER00061"/>
</dbReference>
<dbReference type="Proteomes" id="UP000000428">
    <property type="component" value="Chromosome"/>
</dbReference>
<dbReference type="GO" id="GO:0005829">
    <property type="term" value="C:cytosol"/>
    <property type="evidence" value="ECO:0007669"/>
    <property type="project" value="TreeGrafter"/>
</dbReference>
<dbReference type="GO" id="GO:0051537">
    <property type="term" value="F:2 iron, 2 sulfur cluster binding"/>
    <property type="evidence" value="ECO:0007669"/>
    <property type="project" value="UniProtKB-UniRule"/>
</dbReference>
<dbReference type="GO" id="GO:0004160">
    <property type="term" value="F:dihydroxy-acid dehydratase activity"/>
    <property type="evidence" value="ECO:0007669"/>
    <property type="project" value="UniProtKB-UniRule"/>
</dbReference>
<dbReference type="GO" id="GO:0000287">
    <property type="term" value="F:magnesium ion binding"/>
    <property type="evidence" value="ECO:0007669"/>
    <property type="project" value="UniProtKB-UniRule"/>
</dbReference>
<dbReference type="GO" id="GO:0009097">
    <property type="term" value="P:isoleucine biosynthetic process"/>
    <property type="evidence" value="ECO:0007669"/>
    <property type="project" value="UniProtKB-UniRule"/>
</dbReference>
<dbReference type="GO" id="GO:0009099">
    <property type="term" value="P:L-valine biosynthetic process"/>
    <property type="evidence" value="ECO:0007669"/>
    <property type="project" value="UniProtKB-UniRule"/>
</dbReference>
<dbReference type="FunFam" id="3.50.30.80:FF:000001">
    <property type="entry name" value="Dihydroxy-acid dehydratase"/>
    <property type="match status" value="1"/>
</dbReference>
<dbReference type="Gene3D" id="3.50.30.80">
    <property type="entry name" value="IlvD/EDD C-terminal domain-like"/>
    <property type="match status" value="1"/>
</dbReference>
<dbReference type="HAMAP" id="MF_00012">
    <property type="entry name" value="IlvD"/>
    <property type="match status" value="1"/>
</dbReference>
<dbReference type="InterPro" id="IPR042096">
    <property type="entry name" value="Dihydro-acid_dehy_C"/>
</dbReference>
<dbReference type="InterPro" id="IPR004404">
    <property type="entry name" value="DihydroxyA_deHydtase"/>
</dbReference>
<dbReference type="InterPro" id="IPR020558">
    <property type="entry name" value="DiOHA_6PGluconate_deHydtase_CS"/>
</dbReference>
<dbReference type="InterPro" id="IPR056740">
    <property type="entry name" value="ILV_EDD_C"/>
</dbReference>
<dbReference type="InterPro" id="IPR000581">
    <property type="entry name" value="ILV_EDD_N"/>
</dbReference>
<dbReference type="InterPro" id="IPR037237">
    <property type="entry name" value="IlvD/EDD_N"/>
</dbReference>
<dbReference type="NCBIfam" id="TIGR00110">
    <property type="entry name" value="ilvD"/>
    <property type="match status" value="1"/>
</dbReference>
<dbReference type="NCBIfam" id="NF009103">
    <property type="entry name" value="PRK12448.1"/>
    <property type="match status" value="1"/>
</dbReference>
<dbReference type="PANTHER" id="PTHR43661">
    <property type="entry name" value="D-XYLONATE DEHYDRATASE"/>
    <property type="match status" value="1"/>
</dbReference>
<dbReference type="PANTHER" id="PTHR43661:SF3">
    <property type="entry name" value="D-XYLONATE DEHYDRATASE YAGF-RELATED"/>
    <property type="match status" value="1"/>
</dbReference>
<dbReference type="Pfam" id="PF24877">
    <property type="entry name" value="ILV_EDD_C"/>
    <property type="match status" value="1"/>
</dbReference>
<dbReference type="Pfam" id="PF00920">
    <property type="entry name" value="ILVD_EDD_N"/>
    <property type="match status" value="1"/>
</dbReference>
<dbReference type="SUPFAM" id="SSF143975">
    <property type="entry name" value="IlvD/EDD N-terminal domain-like"/>
    <property type="match status" value="1"/>
</dbReference>
<dbReference type="SUPFAM" id="SSF52016">
    <property type="entry name" value="LeuD/IlvD-like"/>
    <property type="match status" value="1"/>
</dbReference>
<dbReference type="PROSITE" id="PS00886">
    <property type="entry name" value="ILVD_EDD_1"/>
    <property type="match status" value="1"/>
</dbReference>
<dbReference type="PROSITE" id="PS00887">
    <property type="entry name" value="ILVD_EDD_2"/>
    <property type="match status" value="1"/>
</dbReference>
<feature type="chain" id="PRO_0000103513" description="Dihydroxy-acid dehydratase">
    <location>
        <begin position="1"/>
        <end position="617"/>
    </location>
</feature>
<feature type="active site" description="Proton acceptor" evidence="1">
    <location>
        <position position="523"/>
    </location>
</feature>
<feature type="binding site" evidence="1">
    <location>
        <position position="82"/>
    </location>
    <ligand>
        <name>Mg(2+)</name>
        <dbReference type="ChEBI" id="CHEBI:18420"/>
    </ligand>
</feature>
<feature type="binding site" evidence="1">
    <location>
        <position position="123"/>
    </location>
    <ligand>
        <name>[2Fe-2S] cluster</name>
        <dbReference type="ChEBI" id="CHEBI:190135"/>
    </ligand>
</feature>
<feature type="binding site" evidence="1">
    <location>
        <position position="124"/>
    </location>
    <ligand>
        <name>Mg(2+)</name>
        <dbReference type="ChEBI" id="CHEBI:18420"/>
    </ligand>
</feature>
<feature type="binding site" description="via carbamate group" evidence="1">
    <location>
        <position position="125"/>
    </location>
    <ligand>
        <name>Mg(2+)</name>
        <dbReference type="ChEBI" id="CHEBI:18420"/>
    </ligand>
</feature>
<feature type="binding site" evidence="1">
    <location>
        <position position="197"/>
    </location>
    <ligand>
        <name>[2Fe-2S] cluster</name>
        <dbReference type="ChEBI" id="CHEBI:190135"/>
    </ligand>
</feature>
<feature type="binding site" evidence="1">
    <location>
        <position position="497"/>
    </location>
    <ligand>
        <name>Mg(2+)</name>
        <dbReference type="ChEBI" id="CHEBI:18420"/>
    </ligand>
</feature>
<feature type="modified residue" description="N6-carboxylysine" evidence="1">
    <location>
        <position position="125"/>
    </location>
</feature>
<proteinExistence type="inferred from homology"/>
<reference key="1">
    <citation type="journal article" date="2001" name="Proc. Natl. Acad. Sci. U.S.A.">
        <title>Genome sequence of an industrial microorganism Streptomyces avermitilis: deducing the ability of producing secondary metabolites.</title>
        <authorList>
            <person name="Omura S."/>
            <person name="Ikeda H."/>
            <person name="Ishikawa J."/>
            <person name="Hanamoto A."/>
            <person name="Takahashi C."/>
            <person name="Shinose M."/>
            <person name="Takahashi Y."/>
            <person name="Horikawa H."/>
            <person name="Nakazawa H."/>
            <person name="Osonoe T."/>
            <person name="Kikuchi H."/>
            <person name="Shiba T."/>
            <person name="Sakaki Y."/>
            <person name="Hattori M."/>
        </authorList>
    </citation>
    <scope>NUCLEOTIDE SEQUENCE [LARGE SCALE GENOMIC DNA]</scope>
    <source>
        <strain>ATCC 31267 / DSM 46492 / JCM 5070 / NBRC 14893 / NCIMB 12804 / NRRL 8165 / MA-4680</strain>
    </source>
</reference>
<reference key="2">
    <citation type="journal article" date="2003" name="Nat. Biotechnol.">
        <title>Complete genome sequence and comparative analysis of the industrial microorganism Streptomyces avermitilis.</title>
        <authorList>
            <person name="Ikeda H."/>
            <person name="Ishikawa J."/>
            <person name="Hanamoto A."/>
            <person name="Shinose M."/>
            <person name="Kikuchi H."/>
            <person name="Shiba T."/>
            <person name="Sakaki Y."/>
            <person name="Hattori M."/>
            <person name="Omura S."/>
        </authorList>
    </citation>
    <scope>NUCLEOTIDE SEQUENCE [LARGE SCALE GENOMIC DNA]</scope>
    <source>
        <strain>ATCC 31267 / DSM 46492 / JCM 5070 / NBRC 14893 / NCIMB 12804 / NRRL 8165 / MA-4680</strain>
    </source>
</reference>
<accession>Q82E99</accession>
<keyword id="KW-0001">2Fe-2S</keyword>
<keyword id="KW-0028">Amino-acid biosynthesis</keyword>
<keyword id="KW-0100">Branched-chain amino acid biosynthesis</keyword>
<keyword id="KW-0408">Iron</keyword>
<keyword id="KW-0411">Iron-sulfur</keyword>
<keyword id="KW-0456">Lyase</keyword>
<keyword id="KW-0460">Magnesium</keyword>
<keyword id="KW-0479">Metal-binding</keyword>
<keyword id="KW-1185">Reference proteome</keyword>
<gene>
    <name evidence="1" type="primary">ilvD</name>
    <name type="ordered locus">SAV_4716</name>
</gene>